<evidence type="ECO:0000255" key="1">
    <source>
        <dbReference type="HAMAP-Rule" id="MF_01959"/>
    </source>
</evidence>
<protein>
    <recommendedName>
        <fullName evidence="1">Cytochrome c-type biogenesis protein CcmE</fullName>
    </recommendedName>
    <alternativeName>
        <fullName evidence="1">Cytochrome c maturation protein E</fullName>
    </alternativeName>
    <alternativeName>
        <fullName evidence="1">Heme chaperone CcmE</fullName>
    </alternativeName>
</protein>
<reference key="1">
    <citation type="journal article" date="2006" name="J. Bacteriol.">
        <title>Genome sequence of Aeromonas hydrophila ATCC 7966T: jack of all trades.</title>
        <authorList>
            <person name="Seshadri R."/>
            <person name="Joseph S.W."/>
            <person name="Chopra A.K."/>
            <person name="Sha J."/>
            <person name="Shaw J."/>
            <person name="Graf J."/>
            <person name="Haft D.H."/>
            <person name="Wu M."/>
            <person name="Ren Q."/>
            <person name="Rosovitz M.J."/>
            <person name="Madupu R."/>
            <person name="Tallon L."/>
            <person name="Kim M."/>
            <person name="Jin S."/>
            <person name="Vuong H."/>
            <person name="Stine O.C."/>
            <person name="Ali A."/>
            <person name="Horneman A.J."/>
            <person name="Heidelberg J.F."/>
        </authorList>
    </citation>
    <scope>NUCLEOTIDE SEQUENCE [LARGE SCALE GENOMIC DNA]</scope>
    <source>
        <strain>ATCC 7966 / DSM 30187 / BCRC 13018 / CCUG 14551 / JCM 1027 / KCTC 2358 / NCIMB 9240 / NCTC 8049</strain>
    </source>
</reference>
<keyword id="KW-0997">Cell inner membrane</keyword>
<keyword id="KW-1003">Cell membrane</keyword>
<keyword id="KW-0201">Cytochrome c-type biogenesis</keyword>
<keyword id="KW-0349">Heme</keyword>
<keyword id="KW-0408">Iron</keyword>
<keyword id="KW-0472">Membrane</keyword>
<keyword id="KW-0479">Metal-binding</keyword>
<keyword id="KW-1185">Reference proteome</keyword>
<keyword id="KW-0735">Signal-anchor</keyword>
<keyword id="KW-0812">Transmembrane</keyword>
<keyword id="KW-1133">Transmembrane helix</keyword>
<name>CCME_AERHH</name>
<gene>
    <name evidence="1" type="primary">ccmE</name>
    <name evidence="1" type="synonym">cycJ</name>
    <name type="ordered locus">AHA_1397</name>
</gene>
<sequence length="163" mass="17695">MNPRRKKRLTIILAISAGLAAVIGLVLYALSQNIDLFYTPSELVEGKGPDKIKPEEGQRLRIGGLVVPGSVQRDPQSLKVAFKLVDNGGHLVTVEFDGILPDLFREGQGIVAQGTLKDATTVAAFEVLAKHDENYMPPEVADATNGMHFKPEYTEAQLKGSKQ</sequence>
<dbReference type="EMBL" id="CP000462">
    <property type="protein sequence ID" value="ABK36603.1"/>
    <property type="molecule type" value="Genomic_DNA"/>
</dbReference>
<dbReference type="RefSeq" id="WP_011705301.1">
    <property type="nucleotide sequence ID" value="NC_008570.1"/>
</dbReference>
<dbReference type="RefSeq" id="YP_855936.1">
    <property type="nucleotide sequence ID" value="NC_008570.1"/>
</dbReference>
<dbReference type="SMR" id="A0KI35"/>
<dbReference type="STRING" id="380703.AHA_1397"/>
<dbReference type="EnsemblBacteria" id="ABK36603">
    <property type="protein sequence ID" value="ABK36603"/>
    <property type="gene ID" value="AHA_1397"/>
</dbReference>
<dbReference type="GeneID" id="4488344"/>
<dbReference type="KEGG" id="aha:AHA_1397"/>
<dbReference type="PATRIC" id="fig|380703.7.peg.1405"/>
<dbReference type="eggNOG" id="COG2332">
    <property type="taxonomic scope" value="Bacteria"/>
</dbReference>
<dbReference type="HOGENOM" id="CLU_079503_1_0_6"/>
<dbReference type="OrthoDB" id="9793584at2"/>
<dbReference type="Proteomes" id="UP000000756">
    <property type="component" value="Chromosome"/>
</dbReference>
<dbReference type="GO" id="GO:0005886">
    <property type="term" value="C:plasma membrane"/>
    <property type="evidence" value="ECO:0007669"/>
    <property type="project" value="UniProtKB-SubCell"/>
</dbReference>
<dbReference type="GO" id="GO:0020037">
    <property type="term" value="F:heme binding"/>
    <property type="evidence" value="ECO:0007669"/>
    <property type="project" value="InterPro"/>
</dbReference>
<dbReference type="GO" id="GO:0046872">
    <property type="term" value="F:metal ion binding"/>
    <property type="evidence" value="ECO:0007669"/>
    <property type="project" value="UniProtKB-KW"/>
</dbReference>
<dbReference type="GO" id="GO:0017004">
    <property type="term" value="P:cytochrome complex assembly"/>
    <property type="evidence" value="ECO:0007669"/>
    <property type="project" value="UniProtKB-KW"/>
</dbReference>
<dbReference type="FunFam" id="2.40.50.140:FF:000104">
    <property type="entry name" value="Cytochrome c-type biogenesis protein CcmE"/>
    <property type="match status" value="1"/>
</dbReference>
<dbReference type="Gene3D" id="2.40.50.140">
    <property type="entry name" value="Nucleic acid-binding proteins"/>
    <property type="match status" value="1"/>
</dbReference>
<dbReference type="HAMAP" id="MF_01959">
    <property type="entry name" value="CcmE"/>
    <property type="match status" value="1"/>
</dbReference>
<dbReference type="InterPro" id="IPR004329">
    <property type="entry name" value="CcmE"/>
</dbReference>
<dbReference type="InterPro" id="IPR036127">
    <property type="entry name" value="CcmE-like_sf"/>
</dbReference>
<dbReference type="InterPro" id="IPR012340">
    <property type="entry name" value="NA-bd_OB-fold"/>
</dbReference>
<dbReference type="NCBIfam" id="NF009638">
    <property type="entry name" value="PRK13165.1"/>
    <property type="match status" value="1"/>
</dbReference>
<dbReference type="NCBIfam" id="NF009727">
    <property type="entry name" value="PRK13254.1-1"/>
    <property type="match status" value="1"/>
</dbReference>
<dbReference type="NCBIfam" id="NF009729">
    <property type="entry name" value="PRK13254.1-3"/>
    <property type="match status" value="1"/>
</dbReference>
<dbReference type="PANTHER" id="PTHR34128">
    <property type="entry name" value="CYTOCHROME C-TYPE BIOGENESIS PROTEIN CCME HOMOLOG, MITOCHONDRIAL"/>
    <property type="match status" value="1"/>
</dbReference>
<dbReference type="PANTHER" id="PTHR34128:SF2">
    <property type="entry name" value="CYTOCHROME C-TYPE BIOGENESIS PROTEIN CCME HOMOLOG, MITOCHONDRIAL"/>
    <property type="match status" value="1"/>
</dbReference>
<dbReference type="Pfam" id="PF03100">
    <property type="entry name" value="CcmE"/>
    <property type="match status" value="1"/>
</dbReference>
<dbReference type="SUPFAM" id="SSF82093">
    <property type="entry name" value="Heme chaperone CcmE"/>
    <property type="match status" value="1"/>
</dbReference>
<feature type="chain" id="PRO_1000070801" description="Cytochrome c-type biogenesis protein CcmE">
    <location>
        <begin position="1"/>
        <end position="163"/>
    </location>
</feature>
<feature type="topological domain" description="Cytoplasmic" evidence="1">
    <location>
        <begin position="1"/>
        <end position="8"/>
    </location>
</feature>
<feature type="transmembrane region" description="Helical; Signal-anchor for type II membrane protein" evidence="1">
    <location>
        <begin position="9"/>
        <end position="29"/>
    </location>
</feature>
<feature type="topological domain" description="Periplasmic" evidence="1">
    <location>
        <begin position="30"/>
        <end position="163"/>
    </location>
</feature>
<feature type="binding site" description="covalent" evidence="1">
    <location>
        <position position="131"/>
    </location>
    <ligand>
        <name>heme</name>
        <dbReference type="ChEBI" id="CHEBI:30413"/>
    </ligand>
</feature>
<feature type="binding site" description="axial binding residue" evidence="1">
    <location>
        <position position="135"/>
    </location>
    <ligand>
        <name>heme</name>
        <dbReference type="ChEBI" id="CHEBI:30413"/>
    </ligand>
    <ligandPart>
        <name>Fe</name>
        <dbReference type="ChEBI" id="CHEBI:18248"/>
    </ligandPart>
</feature>
<comment type="function">
    <text evidence="1">Heme chaperone required for the biogenesis of c-type cytochromes. Transiently binds heme delivered by CcmC and transfers the heme to apo-cytochromes in a process facilitated by CcmF and CcmH.</text>
</comment>
<comment type="subcellular location">
    <subcellularLocation>
        <location evidence="1">Cell inner membrane</location>
        <topology evidence="1">Single-pass type II membrane protein</topology>
        <orientation evidence="1">Periplasmic side</orientation>
    </subcellularLocation>
</comment>
<comment type="similarity">
    <text evidence="1">Belongs to the CcmE/CycJ family.</text>
</comment>
<proteinExistence type="inferred from homology"/>
<accession>A0KI35</accession>
<organism>
    <name type="scientific">Aeromonas hydrophila subsp. hydrophila (strain ATCC 7966 / DSM 30187 / BCRC 13018 / CCUG 14551 / JCM 1027 / KCTC 2358 / NCIMB 9240 / NCTC 8049)</name>
    <dbReference type="NCBI Taxonomy" id="380703"/>
    <lineage>
        <taxon>Bacteria</taxon>
        <taxon>Pseudomonadati</taxon>
        <taxon>Pseudomonadota</taxon>
        <taxon>Gammaproteobacteria</taxon>
        <taxon>Aeromonadales</taxon>
        <taxon>Aeromonadaceae</taxon>
        <taxon>Aeromonas</taxon>
    </lineage>
</organism>